<feature type="initiator methionine" description="Removed; by host" evidence="1">
    <location>
        <position position="1"/>
    </location>
</feature>
<feature type="chain" id="PRO_0000261219" description="Gag polyprotein">
    <location>
        <begin position="2"/>
        <end position="500"/>
    </location>
</feature>
<feature type="chain" id="PRO_0000038487" description="Matrix protein p17" evidence="1">
    <location>
        <begin position="2"/>
        <end position="132"/>
    </location>
</feature>
<feature type="chain" id="PRO_0000038488" description="Capsid protein p24" evidence="1">
    <location>
        <begin position="133"/>
        <end position="363"/>
    </location>
</feature>
<feature type="peptide" id="PRO_0000038489" description="Spacer peptide 1" evidence="1">
    <location>
        <begin position="364"/>
        <end position="377"/>
    </location>
</feature>
<feature type="chain" id="PRO_0000038490" description="Nucleocapsid protein p7" evidence="1">
    <location>
        <begin position="378"/>
        <end position="432"/>
    </location>
</feature>
<feature type="peptide" id="PRO_0000038491" description="Spacer peptide 2" evidence="1">
    <location>
        <begin position="433"/>
        <end position="448"/>
    </location>
</feature>
<feature type="chain" id="PRO_0000038492" description="p6-gag" evidence="1">
    <location>
        <begin position="449"/>
        <end position="500"/>
    </location>
</feature>
<feature type="zinc finger region" description="CCHC-type 1" evidence="8">
    <location>
        <begin position="390"/>
        <end position="407"/>
    </location>
</feature>
<feature type="zinc finger region" description="CCHC-type 2" evidence="8">
    <location>
        <begin position="411"/>
        <end position="428"/>
    </location>
</feature>
<feature type="region of interest" description="Interaction with Gp41" evidence="6">
    <location>
        <begin position="7"/>
        <end position="31"/>
    </location>
</feature>
<feature type="region of interest" description="Interaction with host CALM1" evidence="5">
    <location>
        <begin position="8"/>
        <end position="43"/>
    </location>
</feature>
<feature type="region of interest" description="Interaction with host AP3D1" evidence="7">
    <location>
        <begin position="12"/>
        <end position="19"/>
    </location>
</feature>
<feature type="region of interest" description="Interaction with membrane phosphatidylinositol 4,5-bisphosphate and RNA" evidence="6">
    <location>
        <begin position="14"/>
        <end position="33"/>
    </location>
</feature>
<feature type="region of interest" description="Interaction with membrane phosphatidylinositol 4,5-bisphosphate" evidence="6">
    <location>
        <begin position="73"/>
        <end position="77"/>
    </location>
</feature>
<feature type="region of interest" description="Disordered" evidence="9">
    <location>
        <begin position="107"/>
        <end position="128"/>
    </location>
</feature>
<feature type="region of interest" description="Interaction with host PPIA/CYPA and NUP153" evidence="6">
    <location>
        <begin position="189"/>
        <end position="227"/>
    </location>
</feature>
<feature type="region of interest" description="PPIA/CYPA-binding loop" evidence="5">
    <location>
        <begin position="217"/>
        <end position="225"/>
    </location>
</feature>
<feature type="region of interest" description="Dimerization/Multimerization of capsid protein p24" evidence="5">
    <location>
        <begin position="277"/>
        <end position="363"/>
    </location>
</feature>
<feature type="region of interest" description="Disordered" evidence="9">
    <location>
        <begin position="444"/>
        <end position="500"/>
    </location>
</feature>
<feature type="short sequence motif" description="Nuclear export signal" evidence="1">
    <location>
        <begin position="16"/>
        <end position="22"/>
    </location>
</feature>
<feature type="short sequence motif" description="Nuclear localization signal" evidence="1">
    <location>
        <begin position="26"/>
        <end position="32"/>
    </location>
</feature>
<feature type="short sequence motif" description="PTAP/PSAP motif">
    <location>
        <begin position="455"/>
        <end position="458"/>
    </location>
</feature>
<feature type="short sequence motif" description="LYPX(n)L motif">
    <location>
        <begin position="483"/>
        <end position="492"/>
    </location>
</feature>
<feature type="site" description="Cleavage; by viral protease" evidence="1">
    <location>
        <begin position="132"/>
        <end position="133"/>
    </location>
</feature>
<feature type="site" description="Cleavage; by viral protease" evidence="1">
    <location>
        <begin position="363"/>
        <end position="364"/>
    </location>
</feature>
<feature type="site" description="Cleavage; by viral protease" evidence="1">
    <location>
        <begin position="377"/>
        <end position="378"/>
    </location>
</feature>
<feature type="site" description="Cleavage; by viral protease" evidence="1">
    <location>
        <begin position="432"/>
        <end position="433"/>
    </location>
</feature>
<feature type="site" description="Cleavage; by viral protease" evidence="1">
    <location>
        <begin position="448"/>
        <end position="449"/>
    </location>
</feature>
<feature type="modified residue" description="Phosphoserine; by host MAPK1" evidence="6">
    <location>
        <position position="148"/>
    </location>
</feature>
<feature type="modified residue" description="Asymmetric dimethylarginine; in Nucleocapsid protein p7; by host PRMT6" evidence="1">
    <location>
        <position position="387"/>
    </location>
</feature>
<feature type="modified residue" description="Asymmetric dimethylarginine; in Nucleocapsid protein p7; by host PRMT6" evidence="1">
    <location>
        <position position="409"/>
    </location>
</feature>
<feature type="lipid moiety-binding region" description="N-myristoyl glycine; by host" evidence="1">
    <location>
        <position position="2"/>
    </location>
</feature>
<feature type="helix" evidence="12">
    <location>
        <begin position="346"/>
        <end position="349"/>
    </location>
</feature>
<feature type="turn" evidence="12">
    <location>
        <begin position="350"/>
        <end position="353"/>
    </location>
</feature>
<feature type="helix" evidence="12">
    <location>
        <begin position="359"/>
        <end position="379"/>
    </location>
</feature>
<feature type="turn" evidence="12">
    <location>
        <begin position="380"/>
        <end position="384"/>
    </location>
</feature>
<feature type="turn" evidence="11">
    <location>
        <begin position="393"/>
        <end position="395"/>
    </location>
</feature>
<feature type="strand" evidence="11">
    <location>
        <begin position="398"/>
        <end position="400"/>
    </location>
</feature>
<feature type="helix" evidence="11">
    <location>
        <begin position="402"/>
        <end position="404"/>
    </location>
</feature>
<name>GAG_HV1LW</name>
<organismHost>
    <name type="scientific">Homo sapiens</name>
    <name type="common">Human</name>
    <dbReference type="NCBI Taxonomy" id="9606"/>
</organismHost>
<keyword id="KW-0002">3D-structure</keyword>
<keyword id="KW-0014">AIDS</keyword>
<keyword id="KW-0167">Capsid protein</keyword>
<keyword id="KW-1032">Host cell membrane</keyword>
<keyword id="KW-1035">Host cytoplasm</keyword>
<keyword id="KW-1039">Host endosome</keyword>
<keyword id="KW-1043">Host membrane</keyword>
<keyword id="KW-1048">Host nucleus</keyword>
<keyword id="KW-0945">Host-virus interaction</keyword>
<keyword id="KW-0449">Lipoprotein</keyword>
<keyword id="KW-0472">Membrane</keyword>
<keyword id="KW-0479">Metal-binding</keyword>
<keyword id="KW-0488">Methylation</keyword>
<keyword id="KW-0519">Myristate</keyword>
<keyword id="KW-0597">Phosphoprotein</keyword>
<keyword id="KW-0677">Repeat</keyword>
<keyword id="KW-0688">Ribosomal frameshifting</keyword>
<keyword id="KW-0694">RNA-binding</keyword>
<keyword id="KW-1198">Viral budding</keyword>
<keyword id="KW-1187">Viral budding via the host ESCRT complexes</keyword>
<keyword id="KW-0543">Viral nucleoprotein</keyword>
<keyword id="KW-1188">Viral release from host cell</keyword>
<keyword id="KW-0946">Virion</keyword>
<keyword id="KW-0862">Zinc</keyword>
<keyword id="KW-0863">Zinc-finger</keyword>
<reference key="1">
    <citation type="journal article" date="1994" name="AIDS Res. Hum. Retroviruses">
        <title>Viral variability and serum antibody response in a laboratory worker infected with HIV type 1 (HTLV type IIIB).</title>
        <authorList>
            <person name="Reitz M.S. Jr."/>
            <person name="Hall L."/>
            <person name="Robert-Guroff M."/>
            <person name="Lautenberger J.A."/>
            <person name="Hahn B.M."/>
            <person name="Shaw G.M."/>
            <person name="Kong L.I."/>
            <person name="Weiss S.H."/>
            <person name="Waters D."/>
            <person name="Gallo R.C."/>
            <person name="Blattner W."/>
        </authorList>
    </citation>
    <scope>NUCLEOTIDE SEQUENCE [GENOMIC RNA]</scope>
</reference>
<reference key="2">
    <citation type="journal article" date="2003" name="Biochim. Biophys. Acta">
        <title>Role of HIV-1 Gag domains in viral assembly.</title>
        <authorList>
            <person name="Scarlata S."/>
            <person name="Carter C."/>
        </authorList>
    </citation>
    <scope>REVIEW</scope>
</reference>
<gene>
    <name type="primary">gag</name>
</gene>
<accession>Q70622</accession>
<protein>
    <recommendedName>
        <fullName>Gag polyprotein</fullName>
    </recommendedName>
    <alternativeName>
        <fullName>Pr55Gag</fullName>
    </alternativeName>
    <component>
        <recommendedName>
            <fullName>Matrix protein p17</fullName>
            <shortName>MA</shortName>
        </recommendedName>
    </component>
    <component>
        <recommendedName>
            <fullName>Capsid protein p24</fullName>
            <shortName>CA</shortName>
        </recommendedName>
    </component>
    <component>
        <recommendedName>
            <fullName evidence="6">Spacer peptide 1</fullName>
            <shortName>SP1</shortName>
        </recommendedName>
        <alternativeName>
            <fullName>p2</fullName>
        </alternativeName>
    </component>
    <component>
        <recommendedName>
            <fullName>Nucleocapsid protein p7</fullName>
            <shortName>NC</shortName>
        </recommendedName>
    </component>
    <component>
        <recommendedName>
            <fullName evidence="6">Spacer peptide 2</fullName>
            <shortName>SP2</shortName>
        </recommendedName>
        <alternativeName>
            <fullName>p1</fullName>
        </alternativeName>
    </component>
    <component>
        <recommendedName>
            <fullName>p6-gag</fullName>
        </recommendedName>
    </component>
</protein>
<sequence>MGARASVLSGGKLDRWEKIRLRPGGKKKYKLKHIVWASRELERFAVNPGLLETSEGCRQILGQLQPSLQTGSEECRSLYNTVATLYCVHQRIEIKDTKEALDKIKEEQNKSKKKAQQAAADTGHSSQVSQNYPIVQNIQGQMVHQAISPRTLNAWVKVVEEKAFSPEVIPMFSALSEGATPQDLNTMLNTVGGHQAAMQMLKETINEEAAEWDRVHPVHAGPIAPGQMREPRGSDIAGTTSTLQEQIGWMTNNPPIPVGEIYKRWIILGLNKIVRMYSPTSILDIRQGPKEPFRDYVDRFYKTLRAEQASQEVKNWMTETLLVQNANPDCKTILKALGPAATLEEMMTACQGVGGPGHKARVLAEAMSQVTNSATIMMQRGNFRNQRKIVKCFNCGKEGHIARNCRAPRKKGCWKCGKEGHQMKDCTERQANFLGKIWPSYKGRPGNFLQSRPEPTAPPEESFRSGVETTTPPQKQEPIDKELYPLTSLRSLFGNDPSSQ</sequence>
<organism>
    <name type="scientific">Human immunodeficiency virus type 1 group M subtype B (isolate LW123)</name>
    <name type="common">HIV-1</name>
    <dbReference type="NCBI Taxonomy" id="82834"/>
    <lineage>
        <taxon>Viruses</taxon>
        <taxon>Riboviria</taxon>
        <taxon>Pararnavirae</taxon>
        <taxon>Artverviricota</taxon>
        <taxon>Revtraviricetes</taxon>
        <taxon>Ortervirales</taxon>
        <taxon>Retroviridae</taxon>
        <taxon>Orthoretrovirinae</taxon>
        <taxon>Lentivirus</taxon>
        <taxon>Human immunodeficiency virus type 1</taxon>
    </lineage>
</organism>
<comment type="function">
    <molecule>Gag polyprotein</molecule>
    <text evidence="5">Mediates, with Gag-Pol polyprotein, the essential events in virion assembly, including binding the plasma membrane, making the protein-protein interactions necessary to create spherical particles, recruiting the viral Env proteins, and packaging the genomic RNA via direct interactions with the RNA packaging sequence (Psi).</text>
</comment>
<comment type="function">
    <molecule>Matrix protein p17</molecule>
    <text evidence="1 6">Targets the polyprotein to the plasma membrane via a multipartite membrane-binding signal, that includes its myristoylated N-terminus (By similarity). Matrix protein is part of the pre-integration complex. Implicated in the release from host cell mediated by Vpu. Binds to RNA (By similarity).</text>
</comment>
<comment type="function">
    <molecule>Capsid protein p24</molecule>
    <text evidence="5 6">Forms the conical core that encapsulates the genomic RNA-nucleocapsid complex in the virion. Most core are conical, with only 7% tubular. The core is constituted by capsid protein hexamer subunits. The core is disassembled soon after virion entry (By similarity). The capsid promotes immune invasion by cloaking viral DNA from CGAS detection (By similarity). Host restriction factors such as TRIM5-alpha or TRIMCyp bind retroviral capsids and cause premature capsid disassembly, leading to blocks in reverse transcription. Capsid restriction by TRIM5 is one of the factors which restricts HIV-1 to the human species. Host PIN1 apparently facilitates the virion uncoating (By similarity). On the other hand, interactions with PDZD8 or CYPA stabilize the capsid (By similarity).</text>
</comment>
<comment type="function">
    <molecule>Nucleocapsid protein p7</molecule>
    <text evidence="5">Encapsulates and protects viral dimeric unspliced genomic RNA (gRNA). Binds these RNAs through its zinc fingers. Acts as a nucleic acid chaperone which is involved in rearangement of nucleic acid secondary structure during gRNA retrotranscription. Also facilitates template switch leading to recombination. As part of the polyprotein, participates in gRNA dimerization, packaging, tRNA incorporation and virion assembly.</text>
</comment>
<comment type="function">
    <molecule>p6-gag</molecule>
    <text evidence="6">Plays a role in budding of the assembled particle by interacting with the host class E VPS proteins TSG101 and PDCD6IP/AIP1.</text>
</comment>
<comment type="subunit">
    <molecule>Gag polyprotein</molecule>
    <text evidence="4 5">Homotrimer; further assembles as hexamers of trimers. Oligomerization possibly creates a central hole into which the cytoplasmic tail of the gp41 envelope protein may be inserted. Interacts with host TRIM22; this interaction seems to disrupt proper trafficking of Gag polyprotein and may interfere with budding. Interacts with host PDZD8. When ubiquitinated, interacts (via p6-gag domain) with host PACSIN2; this interaction allows PACSIN2 recruitment to viral assembly sites and its subsequent incorporation into virions. Interacts with MOV10 (By similarity).</text>
</comment>
<comment type="subunit">
    <molecule>Matrix protein p17</molecule>
    <text evidence="5 6">Homotrimer; further assembles as hexamers of trimers. Interacts with gp41 (via C-terminus). Interacts with host CALM1; this interaction induces a conformational change in the Matrix protein, triggering exposure of the myristate group. Interacts with host AP3D1; this interaction allows the polyprotein trafficking to multivesicular bodies during virus assembly. Part of the pre-integration complex (PIC) which is composed of viral genome, matrix protein, Vpr and integrase.</text>
</comment>
<comment type="subunit">
    <molecule>Capsid protein p24</molecule>
    <text evidence="5 6">Homodimer; the homodimer further multimerizes as homohexamers or homopentamers (By similarity). Interacts with host NUP98 (By similarity). Interacts with host PPIA/CYPA; this interaction stabilizes the capsid (By similarity). Interacts with host NUP153 (By similarity). Interacts with host PDZD8; this interaction stabilizes the capsid. Interacts with host TRIM5; this interaction destabilizes the capsid (By similarity). Interacts with host CPSF6 (By similarity). Interacts with host NONO; the interaction is weak (By similarity).</text>
</comment>
<comment type="subunit">
    <molecule>Nucleocapsid protein p7</molecule>
    <text evidence="6">Interacts with host NUP98.</text>
</comment>
<comment type="subunit">
    <molecule>p6-gag</molecule>
    <text evidence="3 6">Interacts with Vpr; this interaction allows Vpr incorporation into the virion. Interacts with host TSG101. p6-gag interacts with host PDCD6IP/AIP1.</text>
</comment>
<comment type="subcellular location">
    <molecule>Gag polyprotein</molecule>
    <subcellularLocation>
        <location evidence="6">Host cell membrane</location>
        <topology evidence="6">Lipid-anchor</topology>
    </subcellularLocation>
    <subcellularLocation>
        <location evidence="6">Host endosome</location>
        <location evidence="6">Host multivesicular body</location>
    </subcellularLocation>
    <text evidence="6">These locations are probably linked to virus assembly sites. The main location is the cell membrane, but under some circumstances, late endosomal compartments can serve as productive sites for virion assembly.</text>
</comment>
<comment type="subcellular location">
    <molecule>Matrix protein p17</molecule>
    <subcellularLocation>
        <location evidence="6">Virion membrane</location>
        <topology evidence="6">Lipid-anchor</topology>
    </subcellularLocation>
    <subcellularLocation>
        <location evidence="1">Host nucleus</location>
    </subcellularLocation>
    <subcellularLocation>
        <location evidence="1">Host cytoplasm</location>
    </subcellularLocation>
</comment>
<comment type="subcellular location">
    <molecule>Capsid protein p24</molecule>
    <subcellularLocation>
        <location evidence="6">Virion</location>
    </subcellularLocation>
</comment>
<comment type="subcellular location">
    <molecule>Nucleocapsid protein p7</molecule>
    <subcellularLocation>
        <location evidence="6">Virion</location>
    </subcellularLocation>
</comment>
<comment type="alternative products">
    <event type="ribosomal frameshifting"/>
    <isoform>
        <id>Q70622-1</id>
        <name>Gag polyprotein</name>
        <sequence type="displayed"/>
    </isoform>
    <isoform>
        <id>P0C6F2-1</id>
        <name>Gag-Pol polyprotein</name>
        <sequence type="external"/>
    </isoform>
    <text>Translation results in the formation of the Gag polyprotein most of the time. Ribosomal frameshifting at the gag-pol genes boundary occurs at low frequency and produces the Gag-Pol polyprotein. This strategy of translation probably allows the virus to modulate the quantity of each viral protein. Maintenance of a correct Gag to Gag-Pol ratio is essential for RNA dimerization and viral infectivity.</text>
</comment>
<comment type="domain">
    <text evidence="6">Late-budding domains (L domains) are short sequence motifs essential for viral particle budding. They recruit proteins of the host ESCRT machinery (Endosomal Sorting Complex Required for Transport) or ESCRT-associated proteins. p6-gag contains two L domains: a PTAP/PSAP motif, which interacts with the UEV domain of TSG101 and a LYPX(n)L motif which interacts with PDCD6IP/AIP1.</text>
</comment>
<comment type="PTM">
    <text evidence="6">Gag-Pol polyprotein: Specific enzymatic cleavages by the viral protease yield mature proteins.</text>
</comment>
<comment type="PTM">
    <molecule>Matrix protein p17</molecule>
    <text evidence="5">Tyrosine phosphorylated presumably in the virion by a host kinase. Phosphorylation is apparently not a major regulator of membrane association.</text>
</comment>
<comment type="PTM">
    <text evidence="6">Capsid protein p24 is phosphorylated possibly by host MAPK1; this phosphorylation is necessary for Pin1-mediated virion uncoating.</text>
</comment>
<comment type="PTM">
    <text evidence="2">Nucleocapsid protein p7 is methylated by host PRMT6, impairing its function by reducing RNA annealing and the initiation of reverse transcription.</text>
</comment>
<comment type="miscellaneous">
    <text>HIV-1 lineages are divided in three main groups, M (for Major), O (for Outlier), and N (for New, or Non-M, Non-O). The vast majority of strains found worldwide belong to the group M. Group O seems to be endemic to and largely confined to Cameroon and neighboring countries in West Central Africa, where these viruses represent a small minority of HIV-1 strains. The group N is represented by a limited number of isolates from Cameroonian persons. The group M is further subdivided in 9 clades or subtypes (A to D, F to H, J and K).</text>
</comment>
<comment type="miscellaneous">
    <molecule>Isoform Gag polyprotein</molecule>
    <text>Produced by conventional translation.</text>
</comment>
<comment type="similarity">
    <text evidence="10">Belongs to the primate lentivirus group gag polyprotein family.</text>
</comment>
<dbReference type="EMBL" id="U12055">
    <property type="protein sequence ID" value="AAA76686.1"/>
    <property type="molecule type" value="Genomic_RNA"/>
</dbReference>
<dbReference type="PDB" id="1HVN">
    <property type="method" value="NMR"/>
    <property type="chains" value="E=390-407"/>
</dbReference>
<dbReference type="PDB" id="1HVO">
    <property type="method" value="NMR"/>
    <property type="chains" value="E=390-407"/>
</dbReference>
<dbReference type="PDB" id="1U57">
    <property type="method" value="NMR"/>
    <property type="chains" value="A=343-390"/>
</dbReference>
<dbReference type="PDB" id="2ZNF">
    <property type="method" value="NMR"/>
    <property type="chains" value="A=390-407"/>
</dbReference>
<dbReference type="PDBsum" id="1HVN"/>
<dbReference type="PDBsum" id="1HVO"/>
<dbReference type="PDBsum" id="1U57"/>
<dbReference type="PDBsum" id="2ZNF"/>
<dbReference type="SMR" id="Q70622"/>
<dbReference type="EvolutionaryTrace" id="Q70622"/>
<dbReference type="PRO" id="PR:Q70622"/>
<dbReference type="Proteomes" id="UP000165413">
    <property type="component" value="Genome"/>
</dbReference>
<dbReference type="GO" id="GO:0042025">
    <property type="term" value="C:host cell nucleus"/>
    <property type="evidence" value="ECO:0007669"/>
    <property type="project" value="UniProtKB-SubCell"/>
</dbReference>
<dbReference type="GO" id="GO:0020002">
    <property type="term" value="C:host cell plasma membrane"/>
    <property type="evidence" value="ECO:0007669"/>
    <property type="project" value="UniProtKB-SubCell"/>
</dbReference>
<dbReference type="GO" id="GO:0072494">
    <property type="term" value="C:host multivesicular body"/>
    <property type="evidence" value="ECO:0007669"/>
    <property type="project" value="UniProtKB-SubCell"/>
</dbReference>
<dbReference type="GO" id="GO:0016020">
    <property type="term" value="C:membrane"/>
    <property type="evidence" value="ECO:0007669"/>
    <property type="project" value="UniProtKB-KW"/>
</dbReference>
<dbReference type="GO" id="GO:0019013">
    <property type="term" value="C:viral nucleocapsid"/>
    <property type="evidence" value="ECO:0007669"/>
    <property type="project" value="UniProtKB-KW"/>
</dbReference>
<dbReference type="GO" id="GO:0055036">
    <property type="term" value="C:virion membrane"/>
    <property type="evidence" value="ECO:0007669"/>
    <property type="project" value="UniProtKB-SubCell"/>
</dbReference>
<dbReference type="GO" id="GO:0003723">
    <property type="term" value="F:RNA binding"/>
    <property type="evidence" value="ECO:0007669"/>
    <property type="project" value="UniProtKB-KW"/>
</dbReference>
<dbReference type="GO" id="GO:0005198">
    <property type="term" value="F:structural molecule activity"/>
    <property type="evidence" value="ECO:0007669"/>
    <property type="project" value="InterPro"/>
</dbReference>
<dbReference type="GO" id="GO:0008270">
    <property type="term" value="F:zinc ion binding"/>
    <property type="evidence" value="ECO:0007669"/>
    <property type="project" value="UniProtKB-KW"/>
</dbReference>
<dbReference type="GO" id="GO:0039702">
    <property type="term" value="P:viral budding via host ESCRT complex"/>
    <property type="evidence" value="ECO:0007669"/>
    <property type="project" value="UniProtKB-KW"/>
</dbReference>
<dbReference type="GO" id="GO:0075523">
    <property type="term" value="P:viral translational frameshifting"/>
    <property type="evidence" value="ECO:0007669"/>
    <property type="project" value="UniProtKB-KW"/>
</dbReference>
<dbReference type="FunFam" id="1.10.1200.30:FF:000001">
    <property type="entry name" value="Gag polyprotein"/>
    <property type="match status" value="1"/>
</dbReference>
<dbReference type="FunFam" id="1.10.150.90:FF:000001">
    <property type="entry name" value="Gag polyprotein"/>
    <property type="match status" value="1"/>
</dbReference>
<dbReference type="FunFam" id="1.10.375.10:FF:000001">
    <property type="entry name" value="Gag polyprotein"/>
    <property type="match status" value="1"/>
</dbReference>
<dbReference type="FunFam" id="1.20.5.760:FF:000001">
    <property type="entry name" value="Gag polyprotein"/>
    <property type="match status" value="1"/>
</dbReference>
<dbReference type="FunFam" id="4.10.60.10:FF:000001">
    <property type="entry name" value="Gag polyprotein"/>
    <property type="match status" value="1"/>
</dbReference>
<dbReference type="Gene3D" id="1.10.1200.30">
    <property type="match status" value="1"/>
</dbReference>
<dbReference type="Gene3D" id="6.10.250.390">
    <property type="match status" value="1"/>
</dbReference>
<dbReference type="Gene3D" id="1.10.375.10">
    <property type="entry name" value="Human Immunodeficiency Virus Type 1 Capsid Protein"/>
    <property type="match status" value="1"/>
</dbReference>
<dbReference type="Gene3D" id="1.10.150.90">
    <property type="entry name" value="Immunodeficiency lentiviruses, gag gene matrix protein p17"/>
    <property type="match status" value="1"/>
</dbReference>
<dbReference type="Gene3D" id="1.20.5.760">
    <property type="entry name" value="Single helix bin"/>
    <property type="match status" value="1"/>
</dbReference>
<dbReference type="Gene3D" id="4.10.60.10">
    <property type="entry name" value="Zinc finger, CCHC-type"/>
    <property type="match status" value="1"/>
</dbReference>
<dbReference type="InterPro" id="IPR045345">
    <property type="entry name" value="Gag_p24_C"/>
</dbReference>
<dbReference type="InterPro" id="IPR014817">
    <property type="entry name" value="Gag_p6"/>
</dbReference>
<dbReference type="InterPro" id="IPR000071">
    <property type="entry name" value="Lentvrl_matrix_N"/>
</dbReference>
<dbReference type="InterPro" id="IPR012344">
    <property type="entry name" value="Matrix_HIV/RSV_N"/>
</dbReference>
<dbReference type="InterPro" id="IPR050195">
    <property type="entry name" value="Primate_lentivir_Gag_pol-like"/>
</dbReference>
<dbReference type="InterPro" id="IPR008916">
    <property type="entry name" value="Retrov_capsid_C"/>
</dbReference>
<dbReference type="InterPro" id="IPR008919">
    <property type="entry name" value="Retrov_capsid_N"/>
</dbReference>
<dbReference type="InterPro" id="IPR010999">
    <property type="entry name" value="Retrovr_matrix"/>
</dbReference>
<dbReference type="InterPro" id="IPR001878">
    <property type="entry name" value="Znf_CCHC"/>
</dbReference>
<dbReference type="InterPro" id="IPR036875">
    <property type="entry name" value="Znf_CCHC_sf"/>
</dbReference>
<dbReference type="PANTHER" id="PTHR40389:SF4">
    <property type="match status" value="1"/>
</dbReference>
<dbReference type="PANTHER" id="PTHR40389">
    <property type="entry name" value="ENDOGENOUS RETROVIRUS GROUP K MEMBER 24 GAG POLYPROTEIN-RELATED"/>
    <property type="match status" value="1"/>
</dbReference>
<dbReference type="Pfam" id="PF00540">
    <property type="entry name" value="Gag_p17"/>
    <property type="match status" value="1"/>
</dbReference>
<dbReference type="Pfam" id="PF00607">
    <property type="entry name" value="Gag_p24"/>
    <property type="match status" value="1"/>
</dbReference>
<dbReference type="Pfam" id="PF19317">
    <property type="entry name" value="Gag_p24_C"/>
    <property type="match status" value="1"/>
</dbReference>
<dbReference type="Pfam" id="PF08705">
    <property type="entry name" value="Gag_p6"/>
    <property type="match status" value="1"/>
</dbReference>
<dbReference type="Pfam" id="PF00098">
    <property type="entry name" value="zf-CCHC"/>
    <property type="match status" value="2"/>
</dbReference>
<dbReference type="PRINTS" id="PR00234">
    <property type="entry name" value="HIV1MATRIX"/>
</dbReference>
<dbReference type="SMART" id="SM00343">
    <property type="entry name" value="ZnF_C2HC"/>
    <property type="match status" value="2"/>
</dbReference>
<dbReference type="SUPFAM" id="SSF47836">
    <property type="entry name" value="Retroviral matrix proteins"/>
    <property type="match status" value="1"/>
</dbReference>
<dbReference type="SUPFAM" id="SSF47353">
    <property type="entry name" value="Retrovirus capsid dimerization domain-like"/>
    <property type="match status" value="1"/>
</dbReference>
<dbReference type="SUPFAM" id="SSF47943">
    <property type="entry name" value="Retrovirus capsid protein, N-terminal core domain"/>
    <property type="match status" value="1"/>
</dbReference>
<dbReference type="SUPFAM" id="SSF57756">
    <property type="entry name" value="Retrovirus zinc finger-like domains"/>
    <property type="match status" value="1"/>
</dbReference>
<dbReference type="PROSITE" id="PS50158">
    <property type="entry name" value="ZF_CCHC"/>
    <property type="match status" value="2"/>
</dbReference>
<evidence type="ECO:0000250" key="1"/>
<evidence type="ECO:0000250" key="2">
    <source>
        <dbReference type="UniProtKB" id="P03347"/>
    </source>
</evidence>
<evidence type="ECO:0000250" key="3">
    <source>
        <dbReference type="UniProtKB" id="P03348"/>
    </source>
</evidence>
<evidence type="ECO:0000250" key="4">
    <source>
        <dbReference type="UniProtKB" id="P03349"/>
    </source>
</evidence>
<evidence type="ECO:0000250" key="5">
    <source>
        <dbReference type="UniProtKB" id="P04591"/>
    </source>
</evidence>
<evidence type="ECO:0000250" key="6">
    <source>
        <dbReference type="UniProtKB" id="P12493"/>
    </source>
</evidence>
<evidence type="ECO:0000250" key="7">
    <source>
        <dbReference type="UniProtKB" id="P12497"/>
    </source>
</evidence>
<evidence type="ECO:0000255" key="8">
    <source>
        <dbReference type="PROSITE-ProRule" id="PRU00047"/>
    </source>
</evidence>
<evidence type="ECO:0000256" key="9">
    <source>
        <dbReference type="SAM" id="MobiDB-lite"/>
    </source>
</evidence>
<evidence type="ECO:0000305" key="10"/>
<evidence type="ECO:0007829" key="11">
    <source>
        <dbReference type="PDB" id="1HVN"/>
    </source>
</evidence>
<evidence type="ECO:0007829" key="12">
    <source>
        <dbReference type="PDB" id="1U57"/>
    </source>
</evidence>
<proteinExistence type="evidence at protein level"/>